<reference key="1">
    <citation type="journal article" date="2006" name="Lancet">
        <title>Complete genome sequence of USA300, an epidemic clone of community-acquired meticillin-resistant Staphylococcus aureus.</title>
        <authorList>
            <person name="Diep B.A."/>
            <person name="Gill S.R."/>
            <person name="Chang R.F."/>
            <person name="Phan T.H."/>
            <person name="Chen J.H."/>
            <person name="Davidson M.G."/>
            <person name="Lin F."/>
            <person name="Lin J."/>
            <person name="Carleton H.A."/>
            <person name="Mongodin E.F."/>
            <person name="Sensabaugh G.F."/>
            <person name="Perdreau-Remington F."/>
        </authorList>
    </citation>
    <scope>NUCLEOTIDE SEQUENCE [LARGE SCALE GENOMIC DNA]</scope>
    <source>
        <strain>USA300</strain>
    </source>
</reference>
<dbReference type="EMBL" id="CP000255">
    <property type="protein sequence ID" value="ABD21484.1"/>
    <property type="molecule type" value="Genomic_DNA"/>
</dbReference>
<dbReference type="RefSeq" id="WP_000492114.1">
    <property type="nucleotide sequence ID" value="NZ_CP027476.1"/>
</dbReference>
<dbReference type="SMR" id="Q2FGF0"/>
<dbReference type="GeneID" id="98345944"/>
<dbReference type="KEGG" id="saa:SAUSA300_1533"/>
<dbReference type="HOGENOM" id="CLU_836378_0_0_9"/>
<dbReference type="OMA" id="MDYYRMK"/>
<dbReference type="Proteomes" id="UP000001939">
    <property type="component" value="Chromosome"/>
</dbReference>
<dbReference type="GO" id="GO:0045121">
    <property type="term" value="C:membrane raft"/>
    <property type="evidence" value="ECO:0007669"/>
    <property type="project" value="UniProtKB-SubCell"/>
</dbReference>
<dbReference type="GO" id="GO:0005886">
    <property type="term" value="C:plasma membrane"/>
    <property type="evidence" value="ECO:0007669"/>
    <property type="project" value="UniProtKB-SubCell"/>
</dbReference>
<dbReference type="HAMAP" id="MF_01562">
    <property type="entry name" value="FloA"/>
    <property type="match status" value="1"/>
</dbReference>
<dbReference type="InterPro" id="IPR022853">
    <property type="entry name" value="FloA"/>
</dbReference>
<dbReference type="NCBIfam" id="NF010186">
    <property type="entry name" value="PRK13665.1"/>
    <property type="match status" value="1"/>
</dbReference>
<dbReference type="Pfam" id="PF12127">
    <property type="entry name" value="FloA"/>
    <property type="match status" value="1"/>
</dbReference>
<feature type="chain" id="PRO_1000069044" description="Flotillin-like protein FloA">
    <location>
        <begin position="1"/>
        <end position="329"/>
    </location>
</feature>
<feature type="transmembrane region" description="Helical" evidence="1">
    <location>
        <begin position="6"/>
        <end position="26"/>
    </location>
</feature>
<feature type="transmembrane region" description="Helical" evidence="1">
    <location>
        <begin position="27"/>
        <end position="47"/>
    </location>
</feature>
<protein>
    <recommendedName>
        <fullName evidence="1">Flotillin-like protein FloA</fullName>
    </recommendedName>
</protein>
<comment type="function">
    <text evidence="1">Found in functional membrane microdomains (FMM) that may be equivalent to eukaryotic membrane rafts. FMMs are highly dynamic and increase in number as cells age. Flotillins are thought to be important factors in membrane fluidity.</text>
</comment>
<comment type="subunit">
    <text evidence="1">Homooligomerizes.</text>
</comment>
<comment type="subcellular location">
    <subcellularLocation>
        <location evidence="1">Cell membrane</location>
        <topology evidence="1">Multi-pass membrane protein</topology>
    </subcellularLocation>
    <subcellularLocation>
        <location evidence="1">Membrane raft</location>
        <topology evidence="1">Multi-pass membrane protein</topology>
    </subcellularLocation>
</comment>
<comment type="similarity">
    <text evidence="1">Belongs to the flotillin-like FloA family.</text>
</comment>
<sequence length="329" mass="35181">MFSLSFIVIAVIIVVALLILFSFVPIGLWISALAAGVHVGIGTLVGMRLRRVSPRKVIAPLIKAHKAGLALTTNQLESHYLAGGNVDRVVDANIAAQRADIDLPFERAAAIDLAGRDVLEAVQMSVNPKVIETPFIAGVAMNGIEVKAKARITVRANIARLVGGAGEETIIARVGEGIVSTIGSSKHHTEVLENPDNISKTVLSKGLDSGTAFEILSIDIADVDISKNIGADLQTEQALADKNIAQAKAEERRAMAVATEQEMKARVQEMHAKVVEAESEVPLAMAEALRSGNISVKDYYNLKNIEADTGMRNAINKRTDQSDDESPEH</sequence>
<keyword id="KW-1003">Cell membrane</keyword>
<keyword id="KW-0472">Membrane</keyword>
<keyword id="KW-0812">Transmembrane</keyword>
<keyword id="KW-1133">Transmembrane helix</keyword>
<name>FLOA_STAA3</name>
<gene>
    <name evidence="1" type="primary">floA</name>
    <name type="ordered locus">SAUSA300_1533</name>
</gene>
<evidence type="ECO:0000255" key="1">
    <source>
        <dbReference type="HAMAP-Rule" id="MF_01562"/>
    </source>
</evidence>
<organism>
    <name type="scientific">Staphylococcus aureus (strain USA300)</name>
    <dbReference type="NCBI Taxonomy" id="367830"/>
    <lineage>
        <taxon>Bacteria</taxon>
        <taxon>Bacillati</taxon>
        <taxon>Bacillota</taxon>
        <taxon>Bacilli</taxon>
        <taxon>Bacillales</taxon>
        <taxon>Staphylococcaceae</taxon>
        <taxon>Staphylococcus</taxon>
    </lineage>
</organism>
<proteinExistence type="inferred from homology"/>
<accession>Q2FGF0</accession>